<reference key="1">
    <citation type="journal article" date="2003" name="Proc. Natl. Acad. Sci. U.S.A.">
        <title>The complete genome sequence of Mycobacterium bovis.</title>
        <authorList>
            <person name="Garnier T."/>
            <person name="Eiglmeier K."/>
            <person name="Camus J.-C."/>
            <person name="Medina N."/>
            <person name="Mansoor H."/>
            <person name="Pryor M."/>
            <person name="Duthoy S."/>
            <person name="Grondin S."/>
            <person name="Lacroix C."/>
            <person name="Monsempe C."/>
            <person name="Simon S."/>
            <person name="Harris B."/>
            <person name="Atkin R."/>
            <person name="Doggett J."/>
            <person name="Mayes R."/>
            <person name="Keating L."/>
            <person name="Wheeler P.R."/>
            <person name="Parkhill J."/>
            <person name="Barrell B.G."/>
            <person name="Cole S.T."/>
            <person name="Gordon S.V."/>
            <person name="Hewinson R.G."/>
        </authorList>
    </citation>
    <scope>NUCLEOTIDE SEQUENCE [LARGE SCALE GENOMIC DNA]</scope>
    <source>
        <strain>ATCC BAA-935 / AF2122/97</strain>
    </source>
</reference>
<reference key="2">
    <citation type="journal article" date="2017" name="Genome Announc.">
        <title>Updated reference genome sequence and annotation of Mycobacterium bovis AF2122/97.</title>
        <authorList>
            <person name="Malone K.M."/>
            <person name="Farrell D."/>
            <person name="Stuber T.P."/>
            <person name="Schubert O.T."/>
            <person name="Aebersold R."/>
            <person name="Robbe-Austerman S."/>
            <person name="Gordon S.V."/>
        </authorList>
    </citation>
    <scope>NUCLEOTIDE SEQUENCE [LARGE SCALE GENOMIC DNA]</scope>
    <scope>GENOME REANNOTATION</scope>
    <source>
        <strain>ATCC BAA-935 / AF2122/97</strain>
    </source>
</reference>
<gene>
    <name type="primary">rplS</name>
    <name type="ordered locus">BQ2027_MB2928C</name>
</gene>
<comment type="function">
    <text evidence="1">This protein is located at the 30S-50S ribosomal subunit interface and may play a role in the structure and function of the aminoacyl-tRNA binding site.</text>
</comment>
<comment type="similarity">
    <text evidence="2">Belongs to the bacterial ribosomal protein bL19 family.</text>
</comment>
<sequence length="113" mass="13013">MNRLDFVDKPSLRDDIPAFNPGDTINVHVKVIEGAKERLQVFKGVVIRRQGGGIRETFTVRKESYGVGVERTFPVHSPNIDHIEVVTRGDVRRAKLYYLRELRGKKAKIKEKR</sequence>
<proteinExistence type="inferred from homology"/>
<protein>
    <recommendedName>
        <fullName evidence="2">Large ribosomal subunit protein bL19</fullName>
    </recommendedName>
    <alternativeName>
        <fullName>50S ribosomal protein L19</fullName>
    </alternativeName>
</protein>
<dbReference type="EMBL" id="LT708304">
    <property type="protein sequence ID" value="SIU01549.1"/>
    <property type="molecule type" value="Genomic_DNA"/>
</dbReference>
<dbReference type="RefSeq" id="NP_856573.1">
    <property type="nucleotide sequence ID" value="NC_002945.3"/>
</dbReference>
<dbReference type="RefSeq" id="WP_003414717.1">
    <property type="nucleotide sequence ID" value="NC_002945.4"/>
</dbReference>
<dbReference type="SMR" id="P66081"/>
<dbReference type="GeneID" id="45426891"/>
<dbReference type="KEGG" id="mbo:BQ2027_MB2928C"/>
<dbReference type="PATRIC" id="fig|233413.5.peg.3214"/>
<dbReference type="Proteomes" id="UP000001419">
    <property type="component" value="Chromosome"/>
</dbReference>
<dbReference type="GO" id="GO:0022625">
    <property type="term" value="C:cytosolic large ribosomal subunit"/>
    <property type="evidence" value="ECO:0007669"/>
    <property type="project" value="TreeGrafter"/>
</dbReference>
<dbReference type="GO" id="GO:0003735">
    <property type="term" value="F:structural constituent of ribosome"/>
    <property type="evidence" value="ECO:0007669"/>
    <property type="project" value="InterPro"/>
</dbReference>
<dbReference type="GO" id="GO:0006412">
    <property type="term" value="P:translation"/>
    <property type="evidence" value="ECO:0007669"/>
    <property type="project" value="UniProtKB-UniRule"/>
</dbReference>
<dbReference type="FunFam" id="2.30.30.790:FF:000001">
    <property type="entry name" value="50S ribosomal protein L19"/>
    <property type="match status" value="1"/>
</dbReference>
<dbReference type="Gene3D" id="2.30.30.790">
    <property type="match status" value="1"/>
</dbReference>
<dbReference type="HAMAP" id="MF_00402">
    <property type="entry name" value="Ribosomal_bL19"/>
    <property type="match status" value="1"/>
</dbReference>
<dbReference type="InterPro" id="IPR001857">
    <property type="entry name" value="Ribosomal_bL19"/>
</dbReference>
<dbReference type="InterPro" id="IPR018257">
    <property type="entry name" value="Ribosomal_bL19_CS"/>
</dbReference>
<dbReference type="InterPro" id="IPR038657">
    <property type="entry name" value="Ribosomal_bL19_sf"/>
</dbReference>
<dbReference type="InterPro" id="IPR008991">
    <property type="entry name" value="Translation_prot_SH3-like_sf"/>
</dbReference>
<dbReference type="NCBIfam" id="TIGR01024">
    <property type="entry name" value="rplS_bact"/>
    <property type="match status" value="1"/>
</dbReference>
<dbReference type="PANTHER" id="PTHR15680:SF9">
    <property type="entry name" value="LARGE RIBOSOMAL SUBUNIT PROTEIN BL19M"/>
    <property type="match status" value="1"/>
</dbReference>
<dbReference type="PANTHER" id="PTHR15680">
    <property type="entry name" value="RIBOSOMAL PROTEIN L19"/>
    <property type="match status" value="1"/>
</dbReference>
<dbReference type="Pfam" id="PF01245">
    <property type="entry name" value="Ribosomal_L19"/>
    <property type="match status" value="1"/>
</dbReference>
<dbReference type="PIRSF" id="PIRSF002191">
    <property type="entry name" value="Ribosomal_L19"/>
    <property type="match status" value="1"/>
</dbReference>
<dbReference type="PRINTS" id="PR00061">
    <property type="entry name" value="RIBOSOMALL19"/>
</dbReference>
<dbReference type="SUPFAM" id="SSF50104">
    <property type="entry name" value="Translation proteins SH3-like domain"/>
    <property type="match status" value="1"/>
</dbReference>
<dbReference type="PROSITE" id="PS01015">
    <property type="entry name" value="RIBOSOMAL_L19"/>
    <property type="match status" value="1"/>
</dbReference>
<feature type="chain" id="PRO_0000163483" description="Large ribosomal subunit protein bL19">
    <location>
        <begin position="1"/>
        <end position="113"/>
    </location>
</feature>
<accession>P66081</accession>
<accession>A0A1R3Y2I8</accession>
<accession>Q10792</accession>
<accession>X2BMD7</accession>
<evidence type="ECO:0000250" key="1"/>
<evidence type="ECO:0000305" key="2"/>
<name>RL19_MYCBO</name>
<organism>
    <name type="scientific">Mycobacterium bovis (strain ATCC BAA-935 / AF2122/97)</name>
    <dbReference type="NCBI Taxonomy" id="233413"/>
    <lineage>
        <taxon>Bacteria</taxon>
        <taxon>Bacillati</taxon>
        <taxon>Actinomycetota</taxon>
        <taxon>Actinomycetes</taxon>
        <taxon>Mycobacteriales</taxon>
        <taxon>Mycobacteriaceae</taxon>
        <taxon>Mycobacterium</taxon>
        <taxon>Mycobacterium tuberculosis complex</taxon>
    </lineage>
</organism>
<keyword id="KW-1185">Reference proteome</keyword>
<keyword id="KW-0687">Ribonucleoprotein</keyword>
<keyword id="KW-0689">Ribosomal protein</keyword>